<evidence type="ECO:0000255" key="1"/>
<evidence type="ECO:0000305" key="2"/>
<gene>
    <name type="primary">PCMP-E75</name>
    <name type="ordered locus">At2g42920</name>
    <name type="ORF">F23E6.4</name>
</gene>
<dbReference type="EMBL" id="AC006580">
    <property type="protein sequence ID" value="AAM15291.1"/>
    <property type="molecule type" value="Genomic_DNA"/>
</dbReference>
<dbReference type="EMBL" id="AC006931">
    <property type="protein sequence ID" value="AAD21717.1"/>
    <property type="molecule type" value="Genomic_DNA"/>
</dbReference>
<dbReference type="EMBL" id="CP002685">
    <property type="protein sequence ID" value="AEC10187.1"/>
    <property type="molecule type" value="Genomic_DNA"/>
</dbReference>
<dbReference type="EMBL" id="CP002685">
    <property type="protein sequence ID" value="ANM63136.1"/>
    <property type="molecule type" value="Genomic_DNA"/>
</dbReference>
<dbReference type="EMBL" id="AK229283">
    <property type="protein sequence ID" value="BAF01146.1"/>
    <property type="molecule type" value="mRNA"/>
</dbReference>
<dbReference type="PIR" id="H84859">
    <property type="entry name" value="H84859"/>
</dbReference>
<dbReference type="RefSeq" id="NP_001325245.1">
    <property type="nucleotide sequence ID" value="NM_001337000.1"/>
</dbReference>
<dbReference type="RefSeq" id="NP_181820.1">
    <property type="nucleotide sequence ID" value="NM_129853.6"/>
</dbReference>
<dbReference type="SMR" id="Q9SJG6"/>
<dbReference type="FunCoup" id="Q9SJG6">
    <property type="interactions" value="477"/>
</dbReference>
<dbReference type="STRING" id="3702.Q9SJG6"/>
<dbReference type="GlyGen" id="Q9SJG6">
    <property type="glycosylation" value="1 site"/>
</dbReference>
<dbReference type="PaxDb" id="3702-AT2G42920.1"/>
<dbReference type="EnsemblPlants" id="AT2G42920.1">
    <property type="protein sequence ID" value="AT2G42920.1"/>
    <property type="gene ID" value="AT2G42920"/>
</dbReference>
<dbReference type="EnsemblPlants" id="AT2G42920.2">
    <property type="protein sequence ID" value="AT2G42920.2"/>
    <property type="gene ID" value="AT2G42920"/>
</dbReference>
<dbReference type="GeneID" id="818893"/>
<dbReference type="Gramene" id="AT2G42920.1">
    <property type="protein sequence ID" value="AT2G42920.1"/>
    <property type="gene ID" value="AT2G42920"/>
</dbReference>
<dbReference type="Gramene" id="AT2G42920.2">
    <property type="protein sequence ID" value="AT2G42920.2"/>
    <property type="gene ID" value="AT2G42920"/>
</dbReference>
<dbReference type="KEGG" id="ath:AT2G42920"/>
<dbReference type="Araport" id="AT2G42920"/>
<dbReference type="TAIR" id="AT2G42920"/>
<dbReference type="eggNOG" id="KOG4197">
    <property type="taxonomic scope" value="Eukaryota"/>
</dbReference>
<dbReference type="HOGENOM" id="CLU_002706_0_6_1"/>
<dbReference type="InParanoid" id="Q9SJG6"/>
<dbReference type="OMA" id="AYLVFTQ"/>
<dbReference type="OrthoDB" id="1882346at2759"/>
<dbReference type="PhylomeDB" id="Q9SJG6"/>
<dbReference type="PRO" id="PR:Q9SJG6"/>
<dbReference type="Proteomes" id="UP000006548">
    <property type="component" value="Chromosome 2"/>
</dbReference>
<dbReference type="ExpressionAtlas" id="Q9SJG6">
    <property type="expression patterns" value="baseline and differential"/>
</dbReference>
<dbReference type="GO" id="GO:0009507">
    <property type="term" value="C:chloroplast"/>
    <property type="evidence" value="ECO:0007669"/>
    <property type="project" value="UniProtKB-SubCell"/>
</dbReference>
<dbReference type="GO" id="GO:0003723">
    <property type="term" value="F:RNA binding"/>
    <property type="evidence" value="ECO:0007669"/>
    <property type="project" value="InterPro"/>
</dbReference>
<dbReference type="GO" id="GO:0009451">
    <property type="term" value="P:RNA modification"/>
    <property type="evidence" value="ECO:0007669"/>
    <property type="project" value="InterPro"/>
</dbReference>
<dbReference type="FunFam" id="1.25.40.10:FF:001576">
    <property type="entry name" value="Pentatricopeptide repeat-containing protein At2g42920, chloroplastic"/>
    <property type="match status" value="1"/>
</dbReference>
<dbReference type="FunFam" id="1.25.40.10:FF:002137">
    <property type="entry name" value="Pentatricopeptide repeat-containing protein At2g42920, chloroplastic"/>
    <property type="match status" value="1"/>
</dbReference>
<dbReference type="FunFam" id="1.25.40.10:FF:000475">
    <property type="entry name" value="Pentatricopeptide repeat-containing protein At5g40410, mitochondrial"/>
    <property type="match status" value="1"/>
</dbReference>
<dbReference type="FunFam" id="1.25.40.10:FF:000231">
    <property type="entry name" value="Pentatricopeptide repeat-containing protein chloroplastic"/>
    <property type="match status" value="1"/>
</dbReference>
<dbReference type="Gene3D" id="1.25.40.10">
    <property type="entry name" value="Tetratricopeptide repeat domain"/>
    <property type="match status" value="4"/>
</dbReference>
<dbReference type="InterPro" id="IPR046848">
    <property type="entry name" value="E_motif"/>
</dbReference>
<dbReference type="InterPro" id="IPR002885">
    <property type="entry name" value="Pentatricopeptide_rpt"/>
</dbReference>
<dbReference type="InterPro" id="IPR046960">
    <property type="entry name" value="PPR_At4g14850-like_plant"/>
</dbReference>
<dbReference type="InterPro" id="IPR011990">
    <property type="entry name" value="TPR-like_helical_dom_sf"/>
</dbReference>
<dbReference type="NCBIfam" id="TIGR00756">
    <property type="entry name" value="PPR"/>
    <property type="match status" value="3"/>
</dbReference>
<dbReference type="PANTHER" id="PTHR47926">
    <property type="entry name" value="PENTATRICOPEPTIDE REPEAT-CONTAINING PROTEIN"/>
    <property type="match status" value="1"/>
</dbReference>
<dbReference type="PANTHER" id="PTHR47926:SF436">
    <property type="entry name" value="PENTATRICOPEPTIDE REPEAT-CONTAINING PROTEIN ELI1, CHLOROPLASTIC-LIKE ISOFORM X2"/>
    <property type="match status" value="1"/>
</dbReference>
<dbReference type="Pfam" id="PF20431">
    <property type="entry name" value="E_motif"/>
    <property type="match status" value="1"/>
</dbReference>
<dbReference type="Pfam" id="PF01535">
    <property type="entry name" value="PPR"/>
    <property type="match status" value="3"/>
</dbReference>
<dbReference type="Pfam" id="PF12854">
    <property type="entry name" value="PPR_1"/>
    <property type="match status" value="1"/>
</dbReference>
<dbReference type="Pfam" id="PF13041">
    <property type="entry name" value="PPR_2"/>
    <property type="match status" value="1"/>
</dbReference>
<dbReference type="Pfam" id="PF13812">
    <property type="entry name" value="PPR_3"/>
    <property type="match status" value="1"/>
</dbReference>
<dbReference type="SUPFAM" id="SSF48452">
    <property type="entry name" value="TPR-like"/>
    <property type="match status" value="1"/>
</dbReference>
<dbReference type="PROSITE" id="PS51375">
    <property type="entry name" value="PPR"/>
    <property type="match status" value="12"/>
</dbReference>
<keyword id="KW-0150">Chloroplast</keyword>
<keyword id="KW-0934">Plastid</keyword>
<keyword id="KW-1185">Reference proteome</keyword>
<keyword id="KW-0677">Repeat</keyword>
<keyword id="KW-0809">Transit peptide</keyword>
<feature type="transit peptide" description="Chloroplast" evidence="1">
    <location>
        <begin position="1"/>
        <end position="14"/>
    </location>
</feature>
<feature type="chain" id="PRO_0000356059" description="Pentatricopeptide repeat-containing protein At2g42920, chloroplastic">
    <location>
        <begin position="15"/>
        <end position="559"/>
    </location>
</feature>
<feature type="repeat" description="PPR 1">
    <location>
        <begin position="88"/>
        <end position="122"/>
    </location>
</feature>
<feature type="repeat" description="PPR 2">
    <location>
        <begin position="125"/>
        <end position="159"/>
    </location>
</feature>
<feature type="repeat" description="PPR 3">
    <location>
        <begin position="160"/>
        <end position="190"/>
    </location>
</feature>
<feature type="repeat" description="PPR 4">
    <location>
        <begin position="191"/>
        <end position="221"/>
    </location>
</feature>
<feature type="repeat" description="PPR 5">
    <location>
        <begin position="222"/>
        <end position="256"/>
    </location>
</feature>
<feature type="repeat" description="PPR 6">
    <location>
        <begin position="257"/>
        <end position="291"/>
    </location>
</feature>
<feature type="repeat" description="PPR 7">
    <location>
        <begin position="292"/>
        <end position="322"/>
    </location>
</feature>
<feature type="repeat" description="PPR 8">
    <location>
        <begin position="323"/>
        <end position="357"/>
    </location>
</feature>
<feature type="repeat" description="PPR 9">
    <location>
        <begin position="358"/>
        <end position="388"/>
    </location>
</feature>
<feature type="repeat" description="PPR 10">
    <location>
        <begin position="394"/>
        <end position="424"/>
    </location>
</feature>
<feature type="region of interest" description="Type E motif">
    <location>
        <begin position="429"/>
        <end position="504"/>
    </location>
</feature>
<feature type="region of interest" description="Type E(+) motif">
    <location>
        <begin position="505"/>
        <end position="535"/>
    </location>
</feature>
<accession>Q9SJG6</accession>
<proteinExistence type="evidence at transcript level"/>
<protein>
    <recommendedName>
        <fullName>Pentatricopeptide repeat-containing protein At2g42920, chloroplastic</fullName>
    </recommendedName>
</protein>
<comment type="subcellular location">
    <subcellularLocation>
        <location evidence="2">Plastid</location>
        <location evidence="2">Chloroplast</location>
    </subcellularLocation>
</comment>
<comment type="similarity">
    <text evidence="2">Belongs to the PPR family. PCMP-E subfamily.</text>
</comment>
<comment type="online information" name="Pentatricopeptide repeat proteins">
    <link uri="https://ppr.plantenergy.uwa.edu.au"/>
</comment>
<organism>
    <name type="scientific">Arabidopsis thaliana</name>
    <name type="common">Mouse-ear cress</name>
    <dbReference type="NCBI Taxonomy" id="3702"/>
    <lineage>
        <taxon>Eukaryota</taxon>
        <taxon>Viridiplantae</taxon>
        <taxon>Streptophyta</taxon>
        <taxon>Embryophyta</taxon>
        <taxon>Tracheophyta</taxon>
        <taxon>Spermatophyta</taxon>
        <taxon>Magnoliopsida</taxon>
        <taxon>eudicotyledons</taxon>
        <taxon>Gunneridae</taxon>
        <taxon>Pentapetalae</taxon>
        <taxon>rosids</taxon>
        <taxon>malvids</taxon>
        <taxon>Brassicales</taxon>
        <taxon>Brassicaceae</taxon>
        <taxon>Camelineae</taxon>
        <taxon>Arabidopsis</taxon>
    </lineage>
</organism>
<name>PP200_ARATH</name>
<reference key="1">
    <citation type="journal article" date="1999" name="Nature">
        <title>Sequence and analysis of chromosome 2 of the plant Arabidopsis thaliana.</title>
        <authorList>
            <person name="Lin X."/>
            <person name="Kaul S."/>
            <person name="Rounsley S.D."/>
            <person name="Shea T.P."/>
            <person name="Benito M.-I."/>
            <person name="Town C.D."/>
            <person name="Fujii C.Y."/>
            <person name="Mason T.M."/>
            <person name="Bowman C.L."/>
            <person name="Barnstead M.E."/>
            <person name="Feldblyum T.V."/>
            <person name="Buell C.R."/>
            <person name="Ketchum K.A."/>
            <person name="Lee J.J."/>
            <person name="Ronning C.M."/>
            <person name="Koo H.L."/>
            <person name="Moffat K.S."/>
            <person name="Cronin L.A."/>
            <person name="Shen M."/>
            <person name="Pai G."/>
            <person name="Van Aken S."/>
            <person name="Umayam L."/>
            <person name="Tallon L.J."/>
            <person name="Gill J.E."/>
            <person name="Adams M.D."/>
            <person name="Carrera A.J."/>
            <person name="Creasy T.H."/>
            <person name="Goodman H.M."/>
            <person name="Somerville C.R."/>
            <person name="Copenhaver G.P."/>
            <person name="Preuss D."/>
            <person name="Nierman W.C."/>
            <person name="White O."/>
            <person name="Eisen J.A."/>
            <person name="Salzberg S.L."/>
            <person name="Fraser C.M."/>
            <person name="Venter J.C."/>
        </authorList>
    </citation>
    <scope>NUCLEOTIDE SEQUENCE [LARGE SCALE GENOMIC DNA]</scope>
    <source>
        <strain>cv. Columbia</strain>
    </source>
</reference>
<reference key="2">
    <citation type="journal article" date="2017" name="Plant J.">
        <title>Araport11: a complete reannotation of the Arabidopsis thaliana reference genome.</title>
        <authorList>
            <person name="Cheng C.Y."/>
            <person name="Krishnakumar V."/>
            <person name="Chan A.P."/>
            <person name="Thibaud-Nissen F."/>
            <person name="Schobel S."/>
            <person name="Town C.D."/>
        </authorList>
    </citation>
    <scope>GENOME REANNOTATION</scope>
    <source>
        <strain>cv. Columbia</strain>
    </source>
</reference>
<reference key="3">
    <citation type="submission" date="2006-07" db="EMBL/GenBank/DDBJ databases">
        <title>Large-scale analysis of RIKEN Arabidopsis full-length (RAFL) cDNAs.</title>
        <authorList>
            <person name="Totoki Y."/>
            <person name="Seki M."/>
            <person name="Ishida J."/>
            <person name="Nakajima M."/>
            <person name="Enju A."/>
            <person name="Kamiya A."/>
            <person name="Narusaka M."/>
            <person name="Shin-i T."/>
            <person name="Nakagawa M."/>
            <person name="Sakamoto N."/>
            <person name="Oishi K."/>
            <person name="Kohara Y."/>
            <person name="Kobayashi M."/>
            <person name="Toyoda A."/>
            <person name="Sakaki Y."/>
            <person name="Sakurai T."/>
            <person name="Iida K."/>
            <person name="Akiyama K."/>
            <person name="Satou M."/>
            <person name="Toyoda T."/>
            <person name="Konagaya A."/>
            <person name="Carninci P."/>
            <person name="Kawai J."/>
            <person name="Hayashizaki Y."/>
            <person name="Shinozaki K."/>
        </authorList>
    </citation>
    <scope>NUCLEOTIDE SEQUENCE [LARGE SCALE MRNA]</scope>
    <source>
        <strain>cv. Columbia</strain>
    </source>
</reference>
<reference key="4">
    <citation type="journal article" date="2004" name="Plant Cell">
        <title>Genome-wide analysis of Arabidopsis pentatricopeptide repeat proteins reveals their essential role in organelle biogenesis.</title>
        <authorList>
            <person name="Lurin C."/>
            <person name="Andres C."/>
            <person name="Aubourg S."/>
            <person name="Bellaoui M."/>
            <person name="Bitton F."/>
            <person name="Bruyere C."/>
            <person name="Caboche M."/>
            <person name="Debast C."/>
            <person name="Gualberto J."/>
            <person name="Hoffmann B."/>
            <person name="Lecharny A."/>
            <person name="Le Ret M."/>
            <person name="Martin-Magniette M.-L."/>
            <person name="Mireau H."/>
            <person name="Peeters N."/>
            <person name="Renou J.-P."/>
            <person name="Szurek B."/>
            <person name="Taconnat L."/>
            <person name="Small I."/>
        </authorList>
    </citation>
    <scope>GENE FAMILY</scope>
</reference>
<sequence>MSPTILSFSGVTVPAMPSSGSLSGNTYLRLIDTQCSTMRELKQIHASLIKTGLISDTVTASRVLAFCCASPSDMNYAYLVFTRINHKNPFVWNTIIRGFSRSSFPEMAISIFIDMLCSSPSVKPQRLTYPSVFKAYGRLGQARDGRQLHGMVIKEGLEDDSFIRNTMLHMYVTCGCLIEAWRIFLGMIGFDVVAWNSMIMGFAKCGLIDQAQNLFDEMPQRNGVSWNSMISGFVRNGRFKDALDMFREMQEKDVKPDGFTMVSLLNACAYLGASEQGRWIHEYIVRNRFELNSIVVTALIDMYCKCGCIEEGLNVFECAPKKQLSCWNSMILGLANNGFEERAMDLFSELERSGLEPDSVSFIGVLTACAHSGEVHRADEFFRLMKEKYMIEPSIKHYTLMVNVLGGAGLLEEAEALIKNMPVEEDTVIWSSLLSACRKIGNVEMAKRAAKCLKKLDPDETCGYVLLSNAYASYGLFEEAVEQRLLMKERQMEKEVGCSSIEVDFEVHEFISCGGTHPKSAEIYSLLDILNWDVSTIKSGFAELFDATTRIGFTYLAEK</sequence>